<sequence>MTKKEQALIEQYAKSLVEVASEHHSLDALQADVLAILETFVTTNLDQSLSSLAVPHAEKIKLLTLLKGSNSVYMNNFLNLILQNEREAYLYQMLQTVLNEIAIVSNQYDVTVTSSLPLTEEQKSRVRAVVAKKFAVTAGRLIEKVDPSLIGGFIISVNNKVIDTSIRRQLQAFKMNLK</sequence>
<protein>
    <recommendedName>
        <fullName evidence="1">ATP synthase subunit delta</fullName>
    </recommendedName>
    <alternativeName>
        <fullName evidence="1">ATP synthase F(1) sector subunit delta</fullName>
    </alternativeName>
    <alternativeName>
        <fullName evidence="1">F-type ATPase subunit delta</fullName>
        <shortName evidence="1">F-ATPase subunit delta</shortName>
    </alternativeName>
</protein>
<keyword id="KW-0066">ATP synthesis</keyword>
<keyword id="KW-1003">Cell membrane</keyword>
<keyword id="KW-0139">CF(1)</keyword>
<keyword id="KW-0375">Hydrogen ion transport</keyword>
<keyword id="KW-0406">Ion transport</keyword>
<keyword id="KW-0472">Membrane</keyword>
<keyword id="KW-0813">Transport</keyword>
<name>ATPD_STRPD</name>
<organism>
    <name type="scientific">Streptococcus pyogenes serotype M2 (strain MGAS10270)</name>
    <dbReference type="NCBI Taxonomy" id="370552"/>
    <lineage>
        <taxon>Bacteria</taxon>
        <taxon>Bacillati</taxon>
        <taxon>Bacillota</taxon>
        <taxon>Bacilli</taxon>
        <taxon>Lactobacillales</taxon>
        <taxon>Streptococcaceae</taxon>
        <taxon>Streptococcus</taxon>
    </lineage>
</organism>
<dbReference type="EMBL" id="CP000260">
    <property type="protein sequence ID" value="ABF33698.1"/>
    <property type="molecule type" value="Genomic_DNA"/>
</dbReference>
<dbReference type="SMR" id="Q1JHN8"/>
<dbReference type="KEGG" id="sph:MGAS10270_Spy0633"/>
<dbReference type="HOGENOM" id="CLU_085114_1_2_9"/>
<dbReference type="Proteomes" id="UP000002436">
    <property type="component" value="Chromosome"/>
</dbReference>
<dbReference type="GO" id="GO:0005886">
    <property type="term" value="C:plasma membrane"/>
    <property type="evidence" value="ECO:0007669"/>
    <property type="project" value="UniProtKB-SubCell"/>
</dbReference>
<dbReference type="GO" id="GO:0045259">
    <property type="term" value="C:proton-transporting ATP synthase complex"/>
    <property type="evidence" value="ECO:0007669"/>
    <property type="project" value="UniProtKB-KW"/>
</dbReference>
<dbReference type="GO" id="GO:0046933">
    <property type="term" value="F:proton-transporting ATP synthase activity, rotational mechanism"/>
    <property type="evidence" value="ECO:0007669"/>
    <property type="project" value="UniProtKB-UniRule"/>
</dbReference>
<dbReference type="Gene3D" id="1.10.520.20">
    <property type="entry name" value="N-terminal domain of the delta subunit of the F1F0-ATP synthase"/>
    <property type="match status" value="1"/>
</dbReference>
<dbReference type="HAMAP" id="MF_01416">
    <property type="entry name" value="ATP_synth_delta_bact"/>
    <property type="match status" value="1"/>
</dbReference>
<dbReference type="InterPro" id="IPR026015">
    <property type="entry name" value="ATP_synth_OSCP/delta_N_sf"/>
</dbReference>
<dbReference type="InterPro" id="IPR000711">
    <property type="entry name" value="ATPase_OSCP/dsu"/>
</dbReference>
<dbReference type="NCBIfam" id="TIGR01145">
    <property type="entry name" value="ATP_synt_delta"/>
    <property type="match status" value="1"/>
</dbReference>
<dbReference type="NCBIfam" id="NF004401">
    <property type="entry name" value="PRK05758.2-1"/>
    <property type="match status" value="1"/>
</dbReference>
<dbReference type="PANTHER" id="PTHR11910">
    <property type="entry name" value="ATP SYNTHASE DELTA CHAIN"/>
    <property type="match status" value="1"/>
</dbReference>
<dbReference type="Pfam" id="PF00213">
    <property type="entry name" value="OSCP"/>
    <property type="match status" value="1"/>
</dbReference>
<dbReference type="PRINTS" id="PR00125">
    <property type="entry name" value="ATPASEDELTA"/>
</dbReference>
<dbReference type="SUPFAM" id="SSF47928">
    <property type="entry name" value="N-terminal domain of the delta subunit of the F1F0-ATP synthase"/>
    <property type="match status" value="1"/>
</dbReference>
<proteinExistence type="inferred from homology"/>
<evidence type="ECO:0000255" key="1">
    <source>
        <dbReference type="HAMAP-Rule" id="MF_01416"/>
    </source>
</evidence>
<reference key="1">
    <citation type="journal article" date="2006" name="Proc. Natl. Acad. Sci. U.S.A.">
        <title>Molecular genetic anatomy of inter- and intraserotype variation in the human bacterial pathogen group A Streptococcus.</title>
        <authorList>
            <person name="Beres S.B."/>
            <person name="Richter E.W."/>
            <person name="Nagiec M.J."/>
            <person name="Sumby P."/>
            <person name="Porcella S.F."/>
            <person name="DeLeo F.R."/>
            <person name="Musser J.M."/>
        </authorList>
    </citation>
    <scope>NUCLEOTIDE SEQUENCE [LARGE SCALE GENOMIC DNA]</scope>
    <source>
        <strain>MGAS10270</strain>
    </source>
</reference>
<feature type="chain" id="PRO_1000184812" description="ATP synthase subunit delta">
    <location>
        <begin position="1"/>
        <end position="178"/>
    </location>
</feature>
<accession>Q1JHN8</accession>
<comment type="function">
    <text evidence="1">F(1)F(0) ATP synthase produces ATP from ADP in the presence of a proton or sodium gradient. F-type ATPases consist of two structural domains, F(1) containing the extramembraneous catalytic core and F(0) containing the membrane proton channel, linked together by a central stalk and a peripheral stalk. During catalysis, ATP synthesis in the catalytic domain of F(1) is coupled via a rotary mechanism of the central stalk subunits to proton translocation.</text>
</comment>
<comment type="function">
    <text evidence="1">This protein is part of the stalk that links CF(0) to CF(1). It either transmits conformational changes from CF(0) to CF(1) or is implicated in proton conduction.</text>
</comment>
<comment type="subunit">
    <text evidence="1">F-type ATPases have 2 components, F(1) - the catalytic core - and F(0) - the membrane proton channel. F(1) has five subunits: alpha(3), beta(3), gamma(1), delta(1), epsilon(1). F(0) has three main subunits: a(1), b(2) and c(10-14). The alpha and beta chains form an alternating ring which encloses part of the gamma chain. F(1) is attached to F(0) by a central stalk formed by the gamma and epsilon chains, while a peripheral stalk is formed by the delta and b chains.</text>
</comment>
<comment type="subcellular location">
    <subcellularLocation>
        <location evidence="1">Cell membrane</location>
        <topology evidence="1">Peripheral membrane protein</topology>
    </subcellularLocation>
</comment>
<comment type="similarity">
    <text evidence="1">Belongs to the ATPase delta chain family.</text>
</comment>
<gene>
    <name evidence="1" type="primary">atpH</name>
    <name type="ordered locus">MGAS10270_Spy0633</name>
</gene>